<accession>Q9HIS3</accession>
<organism>
    <name type="scientific">Thermoplasma acidophilum (strain ATCC 25905 / DSM 1728 / JCM 9062 / NBRC 15155 / AMRC-C165)</name>
    <dbReference type="NCBI Taxonomy" id="273075"/>
    <lineage>
        <taxon>Archaea</taxon>
        <taxon>Methanobacteriati</taxon>
        <taxon>Thermoplasmatota</taxon>
        <taxon>Thermoplasmata</taxon>
        <taxon>Thermoplasmatales</taxon>
        <taxon>Thermoplasmataceae</taxon>
        <taxon>Thermoplasma</taxon>
    </lineage>
</organism>
<gene>
    <name evidence="1" type="primary">rpl6</name>
    <name type="ordered locus">Ta1255</name>
</gene>
<sequence length="178" mass="19642">MINWKEARSIKIPDGFKVSISGTTVTISYGGKTISKNFANNYVKLVEDGSTIKINASKNNSMVRGIVGTWASEINNMIKGLKDGFQYEMKIDYSHFPMRVSVKGKTVVIENFFGERSPRTAEIVGDTTVTVKGDRVYIAGISKKDVGETAANIERSTIIKGFDPRVFQDGIYLISKGE</sequence>
<proteinExistence type="inferred from homology"/>
<protein>
    <recommendedName>
        <fullName evidence="1">Large ribosomal subunit protein uL6</fullName>
    </recommendedName>
    <alternativeName>
        <fullName evidence="2">50S ribosomal protein L6</fullName>
    </alternativeName>
</protein>
<name>RL6_THEAC</name>
<reference key="1">
    <citation type="journal article" date="2000" name="Nature">
        <title>The genome sequence of the thermoacidophilic scavenger Thermoplasma acidophilum.</title>
        <authorList>
            <person name="Ruepp A."/>
            <person name="Graml W."/>
            <person name="Santos-Martinez M.-L."/>
            <person name="Koretke K.K."/>
            <person name="Volker C."/>
            <person name="Mewes H.-W."/>
            <person name="Frishman D."/>
            <person name="Stocker S."/>
            <person name="Lupas A.N."/>
            <person name="Baumeister W."/>
        </authorList>
    </citation>
    <scope>NUCLEOTIDE SEQUENCE [LARGE SCALE GENOMIC DNA]</scope>
    <source>
        <strain>ATCC 25905 / DSM 1728 / JCM 9062 / NBRC 15155 / AMRC-C165</strain>
    </source>
</reference>
<dbReference type="EMBL" id="AL445067">
    <property type="protein sequence ID" value="CAC12379.1"/>
    <property type="molecule type" value="Genomic_DNA"/>
</dbReference>
<dbReference type="RefSeq" id="WP_010901662.1">
    <property type="nucleotide sequence ID" value="NC_002578.1"/>
</dbReference>
<dbReference type="SMR" id="Q9HIS3"/>
<dbReference type="FunCoup" id="Q9HIS3">
    <property type="interactions" value="151"/>
</dbReference>
<dbReference type="STRING" id="273075.gene:9572478"/>
<dbReference type="PaxDb" id="273075-Ta1255"/>
<dbReference type="EnsemblBacteria" id="CAC12379">
    <property type="protein sequence ID" value="CAC12379"/>
    <property type="gene ID" value="CAC12379"/>
</dbReference>
<dbReference type="KEGG" id="tac:Ta1255"/>
<dbReference type="eggNOG" id="arCOG04090">
    <property type="taxonomic scope" value="Archaea"/>
</dbReference>
<dbReference type="HOGENOM" id="CLU_065464_0_0_2"/>
<dbReference type="InParanoid" id="Q9HIS3"/>
<dbReference type="OrthoDB" id="7144at2157"/>
<dbReference type="Proteomes" id="UP000001024">
    <property type="component" value="Chromosome"/>
</dbReference>
<dbReference type="GO" id="GO:0022625">
    <property type="term" value="C:cytosolic large ribosomal subunit"/>
    <property type="evidence" value="ECO:0007669"/>
    <property type="project" value="TreeGrafter"/>
</dbReference>
<dbReference type="GO" id="GO:0019843">
    <property type="term" value="F:rRNA binding"/>
    <property type="evidence" value="ECO:0007669"/>
    <property type="project" value="UniProtKB-UniRule"/>
</dbReference>
<dbReference type="GO" id="GO:0003735">
    <property type="term" value="F:structural constituent of ribosome"/>
    <property type="evidence" value="ECO:0007669"/>
    <property type="project" value="InterPro"/>
</dbReference>
<dbReference type="GO" id="GO:0002181">
    <property type="term" value="P:cytoplasmic translation"/>
    <property type="evidence" value="ECO:0007669"/>
    <property type="project" value="TreeGrafter"/>
</dbReference>
<dbReference type="FunFam" id="3.90.930.12:FF:000008">
    <property type="entry name" value="50S ribosomal protein L6"/>
    <property type="match status" value="1"/>
</dbReference>
<dbReference type="Gene3D" id="3.90.930.12">
    <property type="entry name" value="Ribosomal protein L6, alpha-beta domain"/>
    <property type="match status" value="2"/>
</dbReference>
<dbReference type="HAMAP" id="MF_01365_A">
    <property type="entry name" value="Ribosomal_uL6_A"/>
    <property type="match status" value="1"/>
</dbReference>
<dbReference type="InterPro" id="IPR000702">
    <property type="entry name" value="Ribosomal_uL6-like"/>
</dbReference>
<dbReference type="InterPro" id="IPR036789">
    <property type="entry name" value="Ribosomal_uL6-like_a/b-dom_sf"/>
</dbReference>
<dbReference type="InterPro" id="IPR020040">
    <property type="entry name" value="Ribosomal_uL6_a/b-dom"/>
</dbReference>
<dbReference type="InterPro" id="IPR019907">
    <property type="entry name" value="Ribosomal_uL6_arc"/>
</dbReference>
<dbReference type="NCBIfam" id="NF004037">
    <property type="entry name" value="PRK05518.1"/>
    <property type="match status" value="1"/>
</dbReference>
<dbReference type="NCBIfam" id="TIGR03653">
    <property type="entry name" value="uL6_arch"/>
    <property type="match status" value="1"/>
</dbReference>
<dbReference type="PANTHER" id="PTHR11655:SF16">
    <property type="entry name" value="60S RIBOSOMAL PROTEIN L9"/>
    <property type="match status" value="1"/>
</dbReference>
<dbReference type="PANTHER" id="PTHR11655">
    <property type="entry name" value="60S/50S RIBOSOMAL PROTEIN L6/L9"/>
    <property type="match status" value="1"/>
</dbReference>
<dbReference type="Pfam" id="PF00347">
    <property type="entry name" value="Ribosomal_L6"/>
    <property type="match status" value="1"/>
</dbReference>
<dbReference type="PIRSF" id="PIRSF002162">
    <property type="entry name" value="Ribosomal_L6"/>
    <property type="match status" value="1"/>
</dbReference>
<dbReference type="SUPFAM" id="SSF56053">
    <property type="entry name" value="Ribosomal protein L6"/>
    <property type="match status" value="2"/>
</dbReference>
<keyword id="KW-1185">Reference proteome</keyword>
<keyword id="KW-0687">Ribonucleoprotein</keyword>
<keyword id="KW-0689">Ribosomal protein</keyword>
<keyword id="KW-0694">RNA-binding</keyword>
<keyword id="KW-0699">rRNA-binding</keyword>
<comment type="function">
    <text evidence="1">This protein binds to the 23S rRNA, and is important in its secondary structure. It is located near the subunit interface in the base of the L7/L12 stalk, and near the tRNA binding site of the peptidyltransferase center.</text>
</comment>
<comment type="subunit">
    <text evidence="1">Part of the 50S ribosomal subunit.</text>
</comment>
<comment type="similarity">
    <text evidence="1">Belongs to the universal ribosomal protein uL6 family.</text>
</comment>
<feature type="chain" id="PRO_0000260999" description="Large ribosomal subunit protein uL6">
    <location>
        <begin position="1"/>
        <end position="178"/>
    </location>
</feature>
<evidence type="ECO:0000255" key="1">
    <source>
        <dbReference type="HAMAP-Rule" id="MF_01365"/>
    </source>
</evidence>
<evidence type="ECO:0000305" key="2"/>